<evidence type="ECO:0000255" key="1">
    <source>
        <dbReference type="HAMAP-Rule" id="MF_00248"/>
    </source>
</evidence>
<sequence length="183" mass="19636">MTTIVSVRRNNKVVIAGDGQVSLGNTVMKGNARKVRRLYNNQVLAGFAGGTADAFTLFERFESKLQMHQGHLTKAAVELAKDWRSDRALRKLEALLAVADETASLIITGNGDVVQPENDLIAIGSGGAYAQAAATALLENTDLDAREIAEKALNIAGDICVFTNHHHTVEELESTVELPKPTA</sequence>
<proteinExistence type="inferred from homology"/>
<name>HSLV_VIBC1</name>
<reference key="1">
    <citation type="submission" date="2007-08" db="EMBL/GenBank/DDBJ databases">
        <authorList>
            <consortium name="The Vibrio harveyi Genome Sequencing Project"/>
            <person name="Bassler B."/>
            <person name="Clifton S.W."/>
            <person name="Fulton L."/>
            <person name="Delehaunty K."/>
            <person name="Fronick C."/>
            <person name="Harrison M."/>
            <person name="Markivic C."/>
            <person name="Fulton R."/>
            <person name="Tin-Wollam A.-M."/>
            <person name="Shah N."/>
            <person name="Pepin K."/>
            <person name="Nash W."/>
            <person name="Thiruvilangam P."/>
            <person name="Bhonagiri V."/>
            <person name="Waters C."/>
            <person name="Tu K.C."/>
            <person name="Irgon J."/>
            <person name="Wilson R.K."/>
        </authorList>
    </citation>
    <scope>NUCLEOTIDE SEQUENCE [LARGE SCALE GENOMIC DNA]</scope>
    <source>
        <strain>ATCC BAA-1116 / BB120</strain>
    </source>
</reference>
<keyword id="KW-0021">Allosteric enzyme</keyword>
<keyword id="KW-0963">Cytoplasm</keyword>
<keyword id="KW-0378">Hydrolase</keyword>
<keyword id="KW-0479">Metal-binding</keyword>
<keyword id="KW-0645">Protease</keyword>
<keyword id="KW-0915">Sodium</keyword>
<keyword id="KW-0888">Threonine protease</keyword>
<accession>A7MWJ4</accession>
<dbReference type="EC" id="3.4.25.2" evidence="1"/>
<dbReference type="EMBL" id="CP000789">
    <property type="protein sequence ID" value="ABU69725.1"/>
    <property type="molecule type" value="Genomic_DNA"/>
</dbReference>
<dbReference type="RefSeq" id="WP_005435051.1">
    <property type="nucleotide sequence ID" value="NC_022269.1"/>
</dbReference>
<dbReference type="SMR" id="A7MWJ4"/>
<dbReference type="MEROPS" id="T01.006"/>
<dbReference type="GeneID" id="67378634"/>
<dbReference type="KEGG" id="vha:VIBHAR_00724"/>
<dbReference type="PATRIC" id="fig|338187.25.peg.1890"/>
<dbReference type="Proteomes" id="UP000008152">
    <property type="component" value="Chromosome I"/>
</dbReference>
<dbReference type="GO" id="GO:0009376">
    <property type="term" value="C:HslUV protease complex"/>
    <property type="evidence" value="ECO:0007669"/>
    <property type="project" value="UniProtKB-UniRule"/>
</dbReference>
<dbReference type="GO" id="GO:0005839">
    <property type="term" value="C:proteasome core complex"/>
    <property type="evidence" value="ECO:0007669"/>
    <property type="project" value="InterPro"/>
</dbReference>
<dbReference type="GO" id="GO:0046872">
    <property type="term" value="F:metal ion binding"/>
    <property type="evidence" value="ECO:0007669"/>
    <property type="project" value="UniProtKB-KW"/>
</dbReference>
<dbReference type="GO" id="GO:0004298">
    <property type="term" value="F:threonine-type endopeptidase activity"/>
    <property type="evidence" value="ECO:0007669"/>
    <property type="project" value="UniProtKB-KW"/>
</dbReference>
<dbReference type="GO" id="GO:0051603">
    <property type="term" value="P:proteolysis involved in protein catabolic process"/>
    <property type="evidence" value="ECO:0007669"/>
    <property type="project" value="InterPro"/>
</dbReference>
<dbReference type="CDD" id="cd01913">
    <property type="entry name" value="protease_HslV"/>
    <property type="match status" value="1"/>
</dbReference>
<dbReference type="FunFam" id="3.60.20.10:FF:000002">
    <property type="entry name" value="ATP-dependent protease subunit HslV"/>
    <property type="match status" value="1"/>
</dbReference>
<dbReference type="Gene3D" id="3.60.20.10">
    <property type="entry name" value="Glutamine Phosphoribosylpyrophosphate, subunit 1, domain 1"/>
    <property type="match status" value="1"/>
</dbReference>
<dbReference type="HAMAP" id="MF_00248">
    <property type="entry name" value="HslV"/>
    <property type="match status" value="1"/>
</dbReference>
<dbReference type="InterPro" id="IPR022281">
    <property type="entry name" value="ATP-dep_Prtase_HsIV_su"/>
</dbReference>
<dbReference type="InterPro" id="IPR029055">
    <property type="entry name" value="Ntn_hydrolases_N"/>
</dbReference>
<dbReference type="InterPro" id="IPR001353">
    <property type="entry name" value="Proteasome_sua/b"/>
</dbReference>
<dbReference type="InterPro" id="IPR023333">
    <property type="entry name" value="Proteasome_suB-type"/>
</dbReference>
<dbReference type="NCBIfam" id="TIGR03692">
    <property type="entry name" value="ATP_dep_HslV"/>
    <property type="match status" value="1"/>
</dbReference>
<dbReference type="NCBIfam" id="NF003964">
    <property type="entry name" value="PRK05456.1"/>
    <property type="match status" value="1"/>
</dbReference>
<dbReference type="PANTHER" id="PTHR32194:SF0">
    <property type="entry name" value="ATP-DEPENDENT PROTEASE SUBUNIT HSLV"/>
    <property type="match status" value="1"/>
</dbReference>
<dbReference type="PANTHER" id="PTHR32194">
    <property type="entry name" value="METALLOPROTEASE TLDD"/>
    <property type="match status" value="1"/>
</dbReference>
<dbReference type="Pfam" id="PF00227">
    <property type="entry name" value="Proteasome"/>
    <property type="match status" value="1"/>
</dbReference>
<dbReference type="PIRSF" id="PIRSF039093">
    <property type="entry name" value="HslV"/>
    <property type="match status" value="1"/>
</dbReference>
<dbReference type="SUPFAM" id="SSF56235">
    <property type="entry name" value="N-terminal nucleophile aminohydrolases (Ntn hydrolases)"/>
    <property type="match status" value="1"/>
</dbReference>
<dbReference type="PROSITE" id="PS51476">
    <property type="entry name" value="PROTEASOME_BETA_2"/>
    <property type="match status" value="1"/>
</dbReference>
<feature type="chain" id="PRO_1000012688" description="ATP-dependent protease subunit HslV">
    <location>
        <begin position="1"/>
        <end position="183"/>
    </location>
</feature>
<feature type="active site" evidence="1">
    <location>
        <position position="2"/>
    </location>
</feature>
<feature type="binding site" evidence="1">
    <location>
        <position position="157"/>
    </location>
    <ligand>
        <name>Na(+)</name>
        <dbReference type="ChEBI" id="CHEBI:29101"/>
    </ligand>
</feature>
<feature type="binding site" evidence="1">
    <location>
        <position position="160"/>
    </location>
    <ligand>
        <name>Na(+)</name>
        <dbReference type="ChEBI" id="CHEBI:29101"/>
    </ligand>
</feature>
<feature type="binding site" evidence="1">
    <location>
        <position position="163"/>
    </location>
    <ligand>
        <name>Na(+)</name>
        <dbReference type="ChEBI" id="CHEBI:29101"/>
    </ligand>
</feature>
<gene>
    <name evidence="1" type="primary">hslV</name>
    <name type="ordered locus">VIBHAR_00724</name>
</gene>
<comment type="function">
    <text evidence="1">Protease subunit of a proteasome-like degradation complex believed to be a general protein degrading machinery.</text>
</comment>
<comment type="catalytic activity">
    <reaction evidence="1">
        <text>ATP-dependent cleavage of peptide bonds with broad specificity.</text>
        <dbReference type="EC" id="3.4.25.2"/>
    </reaction>
</comment>
<comment type="activity regulation">
    <text evidence="1">Allosterically activated by HslU binding.</text>
</comment>
<comment type="subunit">
    <text evidence="1">A double ring-shaped homohexamer of HslV is capped on each side by a ring-shaped HslU homohexamer. The assembly of the HslU/HslV complex is dependent on binding of ATP.</text>
</comment>
<comment type="subcellular location">
    <subcellularLocation>
        <location evidence="1">Cytoplasm</location>
    </subcellularLocation>
</comment>
<comment type="similarity">
    <text evidence="1">Belongs to the peptidase T1B family. HslV subfamily.</text>
</comment>
<organism>
    <name type="scientific">Vibrio campbellii (strain ATCC BAA-1116)</name>
    <dbReference type="NCBI Taxonomy" id="2902295"/>
    <lineage>
        <taxon>Bacteria</taxon>
        <taxon>Pseudomonadati</taxon>
        <taxon>Pseudomonadota</taxon>
        <taxon>Gammaproteobacteria</taxon>
        <taxon>Vibrionales</taxon>
        <taxon>Vibrionaceae</taxon>
        <taxon>Vibrio</taxon>
    </lineage>
</organism>
<protein>
    <recommendedName>
        <fullName evidence="1">ATP-dependent protease subunit HslV</fullName>
        <ecNumber evidence="1">3.4.25.2</ecNumber>
    </recommendedName>
</protein>